<sequence>MTQILLPIALLCLFAASTLSNPLLVELPNGELRGRDNGFYYSYESIPYAEPPIDDLCLEEPRPYTERWENTFDATRPPVDCLQWSQLISQPNKLTGSEDCLTVSIYKPKNLTRISFPVVAHIFGGGWSFGAAIDDGVRPFSSSGNVIVVKTTTEWERLGFMSTGDSVIPGNFGLKDQRLAIKWIRNNIARFGGDPHNIILLGFSTGGSSVHLQLMHKEYGQLVKGAISISGTATVPWAVQANARDLAFRYGKLLGCNNPKNSRELKDCLKKTDAEEFVSTLRHLQVFDYVPFGPFGPVVESPEVESPFLTELPLDTIRSGNFAQVPWLASYTPENGIYNAALLLAKDANGKERIEELNTRWNELAPYFLAYPYTLKRSEMNAHSQKLKYQYLGYKNFSVVNYFDVQRLFTNELYKKGIELSLDSHRKHGASPVYAYVYDNPADKSLAQFLAKRSDISLGTGMGDDYYLLMNNPLREPLRADEKIVSWKLVKMVEDFAAHETLVYDDCVFPNNLGKKKFQLVVIGRNYCKQLEVESFARHGVQ</sequence>
<gene>
    <name type="primary">EstS</name>
</gene>
<dbReference type="EC" id="3.1.1.1"/>
<dbReference type="EMBL" id="X70351">
    <property type="protein sequence ID" value="CAA49809.1"/>
    <property type="molecule type" value="Genomic_DNA"/>
</dbReference>
<dbReference type="PIR" id="JN0438">
    <property type="entry name" value="JN0438"/>
</dbReference>
<dbReference type="SMR" id="Q05487"/>
<dbReference type="ESTHER" id="drovi-estes">
    <property type="family name" value="Carb_B_Arthropoda"/>
</dbReference>
<dbReference type="MEROPS" id="S09.947"/>
<dbReference type="GlyCosmos" id="Q05487">
    <property type="glycosylation" value="2 sites, No reported glycans"/>
</dbReference>
<dbReference type="eggNOG" id="KOG1516">
    <property type="taxonomic scope" value="Eukaryota"/>
</dbReference>
<dbReference type="OrthoDB" id="6846267at2759"/>
<dbReference type="GO" id="GO:0005576">
    <property type="term" value="C:extracellular region"/>
    <property type="evidence" value="ECO:0007669"/>
    <property type="project" value="UniProtKB-SubCell"/>
</dbReference>
<dbReference type="GO" id="GO:0106435">
    <property type="term" value="F:carboxylesterase activity"/>
    <property type="evidence" value="ECO:0007669"/>
    <property type="project" value="UniProtKB-EC"/>
</dbReference>
<dbReference type="CDD" id="cd00312">
    <property type="entry name" value="Esterase_lipase"/>
    <property type="match status" value="1"/>
</dbReference>
<dbReference type="Gene3D" id="3.40.50.1820">
    <property type="entry name" value="alpha/beta hydrolase"/>
    <property type="match status" value="1"/>
</dbReference>
<dbReference type="InterPro" id="IPR029058">
    <property type="entry name" value="AB_hydrolase_fold"/>
</dbReference>
<dbReference type="InterPro" id="IPR002018">
    <property type="entry name" value="CarbesteraseB"/>
</dbReference>
<dbReference type="InterPro" id="IPR019826">
    <property type="entry name" value="Carboxylesterase_B_AS"/>
</dbReference>
<dbReference type="InterPro" id="IPR019819">
    <property type="entry name" value="Carboxylesterase_B_CS"/>
</dbReference>
<dbReference type="PANTHER" id="PTHR43142">
    <property type="entry name" value="CARBOXYLIC ESTER HYDROLASE"/>
    <property type="match status" value="1"/>
</dbReference>
<dbReference type="PANTHER" id="PTHR43142:SF1">
    <property type="entry name" value="CARBOXYLIC ESTER HYDROLASE"/>
    <property type="match status" value="1"/>
</dbReference>
<dbReference type="Pfam" id="PF00135">
    <property type="entry name" value="COesterase"/>
    <property type="match status" value="1"/>
</dbReference>
<dbReference type="SUPFAM" id="SSF53474">
    <property type="entry name" value="alpha/beta-Hydrolases"/>
    <property type="match status" value="1"/>
</dbReference>
<dbReference type="PROSITE" id="PS00122">
    <property type="entry name" value="CARBOXYLESTERASE_B_1"/>
    <property type="match status" value="1"/>
</dbReference>
<dbReference type="PROSITE" id="PS00941">
    <property type="entry name" value="CARBOXYLESTERASE_B_2"/>
    <property type="match status" value="1"/>
</dbReference>
<evidence type="ECO:0000250" key="1"/>
<evidence type="ECO:0000255" key="2"/>
<evidence type="ECO:0000255" key="3">
    <source>
        <dbReference type="PROSITE-ProRule" id="PRU10039"/>
    </source>
</evidence>
<evidence type="ECO:0000305" key="4"/>
<organism>
    <name type="scientific">Drosophila virilis</name>
    <name type="common">Fruit fly</name>
    <dbReference type="NCBI Taxonomy" id="7244"/>
    <lineage>
        <taxon>Eukaryota</taxon>
        <taxon>Metazoa</taxon>
        <taxon>Ecdysozoa</taxon>
        <taxon>Arthropoda</taxon>
        <taxon>Hexapoda</taxon>
        <taxon>Insecta</taxon>
        <taxon>Pterygota</taxon>
        <taxon>Neoptera</taxon>
        <taxon>Endopterygota</taxon>
        <taxon>Diptera</taxon>
        <taxon>Brachycera</taxon>
        <taxon>Muscomorpha</taxon>
        <taxon>Ephydroidea</taxon>
        <taxon>Drosophilidae</taxon>
        <taxon>Drosophila</taxon>
    </lineage>
</organism>
<feature type="signal peptide" evidence="1">
    <location>
        <begin position="1"/>
        <end position="22"/>
    </location>
</feature>
<feature type="chain" id="PRO_0000008565" description="Esterase S">
    <location>
        <begin position="23"/>
        <end position="542"/>
    </location>
</feature>
<feature type="active site" description="Acyl-ester intermediate" evidence="3">
    <location>
        <position position="204"/>
    </location>
</feature>
<feature type="glycosylation site" description="N-linked (GlcNAc...) asparagine" evidence="2">
    <location>
        <position position="110"/>
    </location>
</feature>
<feature type="glycosylation site" description="N-linked (GlcNAc...) asparagine" evidence="2">
    <location>
        <position position="396"/>
    </location>
</feature>
<feature type="disulfide bond" evidence="1">
    <location>
        <begin position="81"/>
        <end position="100"/>
    </location>
</feature>
<feature type="disulfide bond" evidence="1">
    <location>
        <begin position="256"/>
        <end position="268"/>
    </location>
</feature>
<feature type="disulfide bond" evidence="2">
    <location>
        <begin position="507"/>
        <end position="528"/>
    </location>
</feature>
<accession>Q05487</accession>
<comment type="function">
    <text>Transferred from the ejaculatory bulbs of males to the female genitals upon copulation, plays an important role in the reproductive biology.</text>
</comment>
<comment type="catalytic activity">
    <reaction evidence="3">
        <text>a carboxylic ester + H2O = an alcohol + a carboxylate + H(+)</text>
        <dbReference type="Rhea" id="RHEA:21164"/>
        <dbReference type="ChEBI" id="CHEBI:15377"/>
        <dbReference type="ChEBI" id="CHEBI:15378"/>
        <dbReference type="ChEBI" id="CHEBI:29067"/>
        <dbReference type="ChEBI" id="CHEBI:30879"/>
        <dbReference type="ChEBI" id="CHEBI:33308"/>
        <dbReference type="EC" id="3.1.1.1"/>
    </reaction>
</comment>
<comment type="subunit">
    <text>Monomer.</text>
</comment>
<comment type="subcellular location">
    <subcellularLocation>
        <location>Secreted</location>
    </subcellularLocation>
</comment>
<comment type="tissue specificity">
    <text>Specifically expressed in the ejaculatory bulbs of male.</text>
</comment>
<comment type="developmental stage">
    <text>In the male, it appears 3 days after emergence in the imago stage and reaches maximum levels by the 10th day.</text>
</comment>
<comment type="similarity">
    <text evidence="4">Belongs to the type-B carboxylesterase/lipase family.</text>
</comment>
<proteinExistence type="evidence at transcript level"/>
<reference key="1">
    <citation type="journal article" date="1989" name="Bioorg. Khim.">
        <title>Primary structure of the esterase s gene from Drosophila virilis.</title>
        <authorList>
            <person name="Sergeev P.V."/>
            <person name="Castillo J.E."/>
            <person name="Peunova N.I."/>
            <person name="Yenikolopov G.N."/>
        </authorList>
    </citation>
    <scope>NUCLEOTIDE SEQUENCE [GENOMIC DNA]</scope>
</reference>
<reference key="2">
    <citation type="journal article" date="1993" name="Nucleic Acids Res.">
        <title>Regulation of tissue-specific expression of the esterase S gene in Drosophila virilis.</title>
        <authorList>
            <person name="Sergeev P.V."/>
            <person name="Yenikolopov G.N."/>
            <person name="Peunova N.I."/>
            <person name="Kuzin B.A."/>
            <person name="Khechumian R.A."/>
            <person name="Korochkin L.I."/>
            <person name="Georgiev G.P."/>
        </authorList>
    </citation>
    <scope>NUCLEOTIDE SEQUENCE [GENOMIC DNA]</scope>
</reference>
<name>ESTS_DROVI</name>
<keyword id="KW-1015">Disulfide bond</keyword>
<keyword id="KW-0325">Glycoprotein</keyword>
<keyword id="KW-0378">Hydrolase</keyword>
<keyword id="KW-0964">Secreted</keyword>
<keyword id="KW-0719">Serine esterase</keyword>
<keyword id="KW-0732">Signal</keyword>
<protein>
    <recommendedName>
        <fullName>Esterase S</fullName>
        <shortName>Est-S</shortName>
        <ecNumber>3.1.1.1</ecNumber>
    </recommendedName>
    <alternativeName>
        <fullName>Carboxylic-ester hydrolase S</fullName>
        <shortName>Carboxylesterase-S</shortName>
    </alternativeName>
</protein>